<sequence>MRVLIKNGIVVNADGQAKQDLLIESGIVRQLGTDISPQLPCEEIDASGCYVFPGGVDVHTHFNIDVGIARSCDDFFTGTRAAACGGTTTIIDHMGFGPNGCRLRHQLEVYRGYAAHKAVIDYSFHGVIQHINHAILDEIPMMVEEGLSSFKLYLTYQYKLNDDEVLQALRRLHESGALTTVHPENDAAIASKRAEFIAAGLTAPRYHALSRPLECEAEAIARMINLAQIAGNAPLYIVHLSNGLGLDYLRLARANHQPVWVETCPQYLLLDERSYDTEDGMKFILSPPLRNVREQDKLWCGISDGAIDVVATDHCTFSMAQRLQISKGDFSRCPNGLPGVENRMQLLFSSGVMTGRISLERFVELTSAMPARLFGLWPQKGILAPGSDGDVVIIDPRQSQQIQHRHLHDNADYSPWEGFTCQGAIVRTLSRGETIFCDGTFTGKAGRGRFLRRKPFVPPVL</sequence>
<evidence type="ECO:0000255" key="1">
    <source>
        <dbReference type="HAMAP-Rule" id="MF_01644"/>
    </source>
</evidence>
<protein>
    <recommendedName>
        <fullName evidence="1">D-phenylhydantoinase</fullName>
        <ecNumber evidence="1">3.5.2.-</ecNumber>
    </recommendedName>
    <alternativeName>
        <fullName evidence="1">Hydantoin-utilizing enzyme HyuA</fullName>
    </alternativeName>
</protein>
<reference key="1">
    <citation type="journal article" date="2009" name="PLoS Genet.">
        <title>Organised genome dynamics in the Escherichia coli species results in highly diverse adaptive paths.</title>
        <authorList>
            <person name="Touchon M."/>
            <person name="Hoede C."/>
            <person name="Tenaillon O."/>
            <person name="Barbe V."/>
            <person name="Baeriswyl S."/>
            <person name="Bidet P."/>
            <person name="Bingen E."/>
            <person name="Bonacorsi S."/>
            <person name="Bouchier C."/>
            <person name="Bouvet O."/>
            <person name="Calteau A."/>
            <person name="Chiapello H."/>
            <person name="Clermont O."/>
            <person name="Cruveiller S."/>
            <person name="Danchin A."/>
            <person name="Diard M."/>
            <person name="Dossat C."/>
            <person name="Karoui M.E."/>
            <person name="Frapy E."/>
            <person name="Garry L."/>
            <person name="Ghigo J.M."/>
            <person name="Gilles A.M."/>
            <person name="Johnson J."/>
            <person name="Le Bouguenec C."/>
            <person name="Lescat M."/>
            <person name="Mangenot S."/>
            <person name="Martinez-Jehanne V."/>
            <person name="Matic I."/>
            <person name="Nassif X."/>
            <person name="Oztas S."/>
            <person name="Petit M.A."/>
            <person name="Pichon C."/>
            <person name="Rouy Z."/>
            <person name="Ruf C.S."/>
            <person name="Schneider D."/>
            <person name="Tourret J."/>
            <person name="Vacherie B."/>
            <person name="Vallenet D."/>
            <person name="Medigue C."/>
            <person name="Rocha E.P.C."/>
            <person name="Denamur E."/>
        </authorList>
    </citation>
    <scope>NUCLEOTIDE SEQUENCE [LARGE SCALE GENOMIC DNA]</scope>
    <source>
        <strain>S88 / ExPEC</strain>
    </source>
</reference>
<accession>B7MM60</accession>
<organism>
    <name type="scientific">Escherichia coli O45:K1 (strain S88 / ExPEC)</name>
    <dbReference type="NCBI Taxonomy" id="585035"/>
    <lineage>
        <taxon>Bacteria</taxon>
        <taxon>Pseudomonadati</taxon>
        <taxon>Pseudomonadota</taxon>
        <taxon>Gammaproteobacteria</taxon>
        <taxon>Enterobacterales</taxon>
        <taxon>Enterobacteriaceae</taxon>
        <taxon>Escherichia</taxon>
    </lineage>
</organism>
<dbReference type="EC" id="3.5.2.-" evidence="1"/>
<dbReference type="EMBL" id="CU928161">
    <property type="protein sequence ID" value="CAR04389.1"/>
    <property type="molecule type" value="Genomic_DNA"/>
</dbReference>
<dbReference type="RefSeq" id="WP_001264431.1">
    <property type="nucleotide sequence ID" value="NC_011742.1"/>
</dbReference>
<dbReference type="SMR" id="B7MM60"/>
<dbReference type="KEGG" id="ecz:ECS88_3152"/>
<dbReference type="HOGENOM" id="CLU_015572_2_0_6"/>
<dbReference type="Proteomes" id="UP000000747">
    <property type="component" value="Chromosome"/>
</dbReference>
<dbReference type="GO" id="GO:0005829">
    <property type="term" value="C:cytosol"/>
    <property type="evidence" value="ECO:0007669"/>
    <property type="project" value="TreeGrafter"/>
</dbReference>
<dbReference type="GO" id="GO:0016812">
    <property type="term" value="F:hydrolase activity, acting on carbon-nitrogen (but not peptide) bonds, in cyclic amides"/>
    <property type="evidence" value="ECO:0007669"/>
    <property type="project" value="UniProtKB-UniRule"/>
</dbReference>
<dbReference type="GO" id="GO:0046872">
    <property type="term" value="F:metal ion binding"/>
    <property type="evidence" value="ECO:0007669"/>
    <property type="project" value="UniProtKB-KW"/>
</dbReference>
<dbReference type="GO" id="GO:0006208">
    <property type="term" value="P:pyrimidine nucleobase catabolic process"/>
    <property type="evidence" value="ECO:0007669"/>
    <property type="project" value="InterPro"/>
</dbReference>
<dbReference type="CDD" id="cd01314">
    <property type="entry name" value="D-HYD"/>
    <property type="match status" value="1"/>
</dbReference>
<dbReference type="FunFam" id="3.20.20.140:FF:000026">
    <property type="entry name" value="D-phenylhydantoinase"/>
    <property type="match status" value="1"/>
</dbReference>
<dbReference type="Gene3D" id="3.20.20.140">
    <property type="entry name" value="Metal-dependent hydrolases"/>
    <property type="match status" value="1"/>
</dbReference>
<dbReference type="Gene3D" id="2.30.40.10">
    <property type="entry name" value="Urease, subunit C, domain 1"/>
    <property type="match status" value="1"/>
</dbReference>
<dbReference type="HAMAP" id="MF_01644">
    <property type="entry name" value="D_hydantoinase"/>
    <property type="match status" value="1"/>
</dbReference>
<dbReference type="InterPro" id="IPR006680">
    <property type="entry name" value="Amidohydro-rel"/>
</dbReference>
<dbReference type="InterPro" id="IPR023766">
    <property type="entry name" value="D_phenylhydantoinase"/>
</dbReference>
<dbReference type="InterPro" id="IPR011778">
    <property type="entry name" value="Hydantoinase/dihydroPyrase"/>
</dbReference>
<dbReference type="InterPro" id="IPR011059">
    <property type="entry name" value="Metal-dep_hydrolase_composite"/>
</dbReference>
<dbReference type="InterPro" id="IPR032466">
    <property type="entry name" value="Metal_Hydrolase"/>
</dbReference>
<dbReference type="InterPro" id="IPR050378">
    <property type="entry name" value="Metallo-dep_Hydrolases_sf"/>
</dbReference>
<dbReference type="NCBIfam" id="TIGR02033">
    <property type="entry name" value="D-hydantoinase"/>
    <property type="match status" value="1"/>
</dbReference>
<dbReference type="PANTHER" id="PTHR11647:SF1">
    <property type="entry name" value="COLLAPSIN RESPONSE MEDIATOR PROTEIN"/>
    <property type="match status" value="1"/>
</dbReference>
<dbReference type="PANTHER" id="PTHR11647">
    <property type="entry name" value="HYDRANTOINASE/DIHYDROPYRIMIDINASE FAMILY MEMBER"/>
    <property type="match status" value="1"/>
</dbReference>
<dbReference type="Pfam" id="PF01979">
    <property type="entry name" value="Amidohydro_1"/>
    <property type="match status" value="1"/>
</dbReference>
<dbReference type="SUPFAM" id="SSF51338">
    <property type="entry name" value="Composite domain of metallo-dependent hydrolases"/>
    <property type="match status" value="2"/>
</dbReference>
<dbReference type="SUPFAM" id="SSF51556">
    <property type="entry name" value="Metallo-dependent hydrolases"/>
    <property type="match status" value="1"/>
</dbReference>
<keyword id="KW-0378">Hydrolase</keyword>
<keyword id="KW-0479">Metal-binding</keyword>
<keyword id="KW-1185">Reference proteome</keyword>
<gene>
    <name evidence="1" type="primary">hyuA</name>
    <name type="ordered locus">ECS88_3152</name>
</gene>
<comment type="function">
    <text evidence="1">Catalyzes the stereospecific hydrolysis of the cyclic amide bond of D-hydantoin derivatives with an aromatic side chains at the 5'-position. Has no activity on dihydropyrimidines. The physiological function is unknown.</text>
</comment>
<comment type="catalytic activity">
    <reaction evidence="1">
        <text>D-5-phenylhydantoin + H2O = N-carbamoyl-D-phenylglycine + H(+)</text>
        <dbReference type="Rhea" id="RHEA:51664"/>
        <dbReference type="ChEBI" id="CHEBI:15377"/>
        <dbReference type="ChEBI" id="CHEBI:15378"/>
        <dbReference type="ChEBI" id="CHEBI:140750"/>
        <dbReference type="ChEBI" id="CHEBI:140758"/>
    </reaction>
</comment>
<comment type="cofactor">
    <cofactor evidence="1">
        <name>a divalent metal cation</name>
        <dbReference type="ChEBI" id="CHEBI:60240"/>
    </cofactor>
    <text evidence="1">Binds 2 divalent metal cations per subunit.</text>
</comment>
<comment type="subunit">
    <text evidence="1">Homotetramer.</text>
</comment>
<comment type="PTM">
    <text evidence="1">Carboxylation allows a single lysine to coordinate two divalent metal cations.</text>
</comment>
<comment type="similarity">
    <text evidence="1">Belongs to the metallo-dependent hydrolases superfamily. Hydantoinase/dihydropyrimidinase family.</text>
</comment>
<name>PHYDA_ECO45</name>
<feature type="chain" id="PRO_1000186908" description="D-phenylhydantoinase">
    <location>
        <begin position="1"/>
        <end position="461"/>
    </location>
</feature>
<feature type="binding site" evidence="1">
    <location>
        <position position="59"/>
    </location>
    <ligand>
        <name>a divalent metal cation</name>
        <dbReference type="ChEBI" id="CHEBI:60240"/>
        <label>1</label>
    </ligand>
</feature>
<feature type="binding site" evidence="1">
    <location>
        <position position="61"/>
    </location>
    <ligand>
        <name>a divalent metal cation</name>
        <dbReference type="ChEBI" id="CHEBI:60240"/>
        <label>1</label>
    </ligand>
</feature>
<feature type="binding site" description="via carbamate group" evidence="1">
    <location>
        <position position="151"/>
    </location>
    <ligand>
        <name>a divalent metal cation</name>
        <dbReference type="ChEBI" id="CHEBI:60240"/>
        <label>1</label>
    </ligand>
</feature>
<feature type="binding site" description="via carbamate group" evidence="1">
    <location>
        <position position="151"/>
    </location>
    <ligand>
        <name>a divalent metal cation</name>
        <dbReference type="ChEBI" id="CHEBI:60240"/>
        <label>2</label>
    </ligand>
</feature>
<feature type="binding site" evidence="1">
    <location>
        <position position="156"/>
    </location>
    <ligand>
        <name>substrate</name>
    </ligand>
</feature>
<feature type="binding site" evidence="1">
    <location>
        <position position="182"/>
    </location>
    <ligand>
        <name>a divalent metal cation</name>
        <dbReference type="ChEBI" id="CHEBI:60240"/>
        <label>2</label>
    </ligand>
</feature>
<feature type="binding site" evidence="1">
    <location>
        <position position="239"/>
    </location>
    <ligand>
        <name>a divalent metal cation</name>
        <dbReference type="ChEBI" id="CHEBI:60240"/>
        <label>2</label>
    </ligand>
</feature>
<feature type="binding site" evidence="1">
    <location>
        <position position="286"/>
    </location>
    <ligand>
        <name>substrate</name>
    </ligand>
</feature>
<feature type="binding site" evidence="1">
    <location>
        <position position="313"/>
    </location>
    <ligand>
        <name>a divalent metal cation</name>
        <dbReference type="ChEBI" id="CHEBI:60240"/>
        <label>1</label>
    </ligand>
</feature>
<feature type="binding site" evidence="1">
    <location>
        <position position="335"/>
    </location>
    <ligand>
        <name>substrate</name>
    </ligand>
</feature>
<feature type="modified residue" description="N6-carboxylysine" evidence="1">
    <location>
        <position position="151"/>
    </location>
</feature>
<proteinExistence type="inferred from homology"/>